<organism>
    <name type="scientific">Naja annulifera</name>
    <name type="common">Banded Egyptian cobra</name>
    <name type="synonym">Naja haje annulifera</name>
    <dbReference type="NCBI Taxonomy" id="96794"/>
    <lineage>
        <taxon>Eukaryota</taxon>
        <taxon>Metazoa</taxon>
        <taxon>Chordata</taxon>
        <taxon>Craniata</taxon>
        <taxon>Vertebrata</taxon>
        <taxon>Euteleostomi</taxon>
        <taxon>Lepidosauria</taxon>
        <taxon>Squamata</taxon>
        <taxon>Bifurcata</taxon>
        <taxon>Unidentata</taxon>
        <taxon>Episquamata</taxon>
        <taxon>Toxicofera</taxon>
        <taxon>Serpentes</taxon>
        <taxon>Colubroidea</taxon>
        <taxon>Elapidae</taxon>
        <taxon>Elapinae</taxon>
        <taxon>Naja</taxon>
    </lineage>
</organism>
<protein>
    <recommendedName>
        <fullName>Short neurotoxin 1</fullName>
    </recommendedName>
    <alternativeName>
        <fullName>Neurotoxin alpha</fullName>
    </alternativeName>
</protein>
<accession>P68417</accession>
<accession>P01429</accession>
<feature type="chain" id="PRO_0000093596" description="Short neurotoxin 1" evidence="2">
    <location>
        <begin position="1"/>
        <end position="61"/>
    </location>
</feature>
<feature type="disulfide bond" evidence="1">
    <location>
        <begin position="3"/>
        <end position="23"/>
    </location>
</feature>
<feature type="disulfide bond" evidence="1">
    <location>
        <begin position="17"/>
        <end position="40"/>
    </location>
</feature>
<feature type="disulfide bond" evidence="1">
    <location>
        <begin position="42"/>
        <end position="53"/>
    </location>
</feature>
<feature type="disulfide bond" evidence="1">
    <location>
        <begin position="54"/>
        <end position="59"/>
    </location>
</feature>
<comment type="function">
    <text>Binds to muscle nicotinic acetylcholine receptor (nAChR) and inhibit acetylcholine from binding to the receptor, thereby impairing neuromuscular transmission.</text>
</comment>
<comment type="function">
    <text>Produces peripheral paralysis by blocking neuromuscular transmission at the postsynaptic site. Binds to the muscular nicotinic acetylcholine receptor.</text>
</comment>
<comment type="subcellular location">
    <subcellularLocation>
        <location evidence="2">Secreted</location>
    </subcellularLocation>
</comment>
<comment type="tissue specificity">
    <text evidence="3">Expressed by the venom gland.</text>
</comment>
<comment type="toxic dose">
    <text evidence="2">LD(50) is 0.105 mg/kg by subcutaneous injection.</text>
</comment>
<comment type="similarity">
    <text evidence="3">Belongs to the three-finger toxin family. Short-chain subfamily. Type I alpha-neurotoxin sub-subfamily.</text>
</comment>
<proteinExistence type="evidence at protein level"/>
<sequence length="61" mass="6844">LECHNQQSSQPPTTKTCPGETNCYKKRWRDHRGSITERGCGCPSVKKGIEINCCTTDKCNN</sequence>
<dbReference type="PIR" id="A92049">
    <property type="entry name" value="N1NJ1E"/>
</dbReference>
<dbReference type="SMR" id="P68417"/>
<dbReference type="GO" id="GO:0005576">
    <property type="term" value="C:extracellular region"/>
    <property type="evidence" value="ECO:0007669"/>
    <property type="project" value="UniProtKB-SubCell"/>
</dbReference>
<dbReference type="GO" id="GO:0030550">
    <property type="term" value="F:acetylcholine receptor inhibitor activity"/>
    <property type="evidence" value="ECO:0007669"/>
    <property type="project" value="UniProtKB-KW"/>
</dbReference>
<dbReference type="GO" id="GO:0099106">
    <property type="term" value="F:ion channel regulator activity"/>
    <property type="evidence" value="ECO:0007669"/>
    <property type="project" value="UniProtKB-KW"/>
</dbReference>
<dbReference type="GO" id="GO:0090729">
    <property type="term" value="F:toxin activity"/>
    <property type="evidence" value="ECO:0007669"/>
    <property type="project" value="UniProtKB-KW"/>
</dbReference>
<dbReference type="CDD" id="cd00206">
    <property type="entry name" value="TFP_snake_toxin"/>
    <property type="match status" value="1"/>
</dbReference>
<dbReference type="FunFam" id="2.10.60.10:FF:000024">
    <property type="entry name" value="Cytotoxin 1"/>
    <property type="match status" value="1"/>
</dbReference>
<dbReference type="Gene3D" id="2.10.60.10">
    <property type="entry name" value="CD59"/>
    <property type="match status" value="1"/>
</dbReference>
<dbReference type="InterPro" id="IPR003571">
    <property type="entry name" value="Snake_3FTx"/>
</dbReference>
<dbReference type="InterPro" id="IPR045860">
    <property type="entry name" value="Snake_toxin-like_sf"/>
</dbReference>
<dbReference type="InterPro" id="IPR018354">
    <property type="entry name" value="Snake_toxin_con_site"/>
</dbReference>
<dbReference type="InterPro" id="IPR054131">
    <property type="entry name" value="Toxin_cobra-type"/>
</dbReference>
<dbReference type="Pfam" id="PF21947">
    <property type="entry name" value="Toxin_cobra-type"/>
    <property type="match status" value="1"/>
</dbReference>
<dbReference type="SUPFAM" id="SSF57302">
    <property type="entry name" value="Snake toxin-like"/>
    <property type="match status" value="1"/>
</dbReference>
<dbReference type="PROSITE" id="PS00272">
    <property type="entry name" value="SNAKE_TOXIN"/>
    <property type="match status" value="1"/>
</dbReference>
<keyword id="KW-0008">Acetylcholine receptor inhibiting toxin</keyword>
<keyword id="KW-0903">Direct protein sequencing</keyword>
<keyword id="KW-1015">Disulfide bond</keyword>
<keyword id="KW-0872">Ion channel impairing toxin</keyword>
<keyword id="KW-0528">Neurotoxin</keyword>
<keyword id="KW-0629">Postsynaptic neurotoxin</keyword>
<keyword id="KW-0964">Secreted</keyword>
<keyword id="KW-0800">Toxin</keyword>
<name>3S11_NAJHA</name>
<reference key="1">
    <citation type="journal article" date="1969" name="J. Biol. Chem.">
        <title>A neurotoxin, toxin alpha, from Egyptian cobra (Naja haje haje) venom. I. Purification, properties, and complete amino acid sequence.</title>
        <authorList>
            <person name="Botes D.P."/>
            <person name="Strydom D.J."/>
        </authorList>
    </citation>
    <scope>PROTEIN SEQUENCE</scope>
    <scope>TOXIC DOSE</scope>
    <scope>SUBCELLULAR LOCATION</scope>
    <source>
        <tissue>Venom</tissue>
    </source>
</reference>
<evidence type="ECO:0000250" key="1">
    <source>
        <dbReference type="UniProtKB" id="P0C1Z0"/>
    </source>
</evidence>
<evidence type="ECO:0000269" key="2">
    <source>
    </source>
</evidence>
<evidence type="ECO:0000305" key="3"/>